<accession>Q2NFM3</accession>
<keyword id="KW-0227">DNA damage</keyword>
<keyword id="KW-0234">DNA repair</keyword>
<keyword id="KW-0255">Endonuclease</keyword>
<keyword id="KW-0378">Hydrolase</keyword>
<keyword id="KW-0479">Metal-binding</keyword>
<keyword id="KW-0540">Nuclease</keyword>
<keyword id="KW-1185">Reference proteome</keyword>
<keyword id="KW-0862">Zinc</keyword>
<organism>
    <name type="scientific">Methanosphaera stadtmanae (strain ATCC 43021 / DSM 3091 / JCM 11832 / MCB-3)</name>
    <dbReference type="NCBI Taxonomy" id="339860"/>
    <lineage>
        <taxon>Archaea</taxon>
        <taxon>Methanobacteriati</taxon>
        <taxon>Methanobacteriota</taxon>
        <taxon>Methanomada group</taxon>
        <taxon>Methanobacteria</taxon>
        <taxon>Methanobacteriales</taxon>
        <taxon>Methanobacteriaceae</taxon>
        <taxon>Methanosphaera</taxon>
    </lineage>
</organism>
<reference key="1">
    <citation type="journal article" date="2006" name="J. Bacteriol.">
        <title>The genome sequence of Methanosphaera stadtmanae reveals why this human intestinal archaeon is restricted to methanol and H2 for methane formation and ATP synthesis.</title>
        <authorList>
            <person name="Fricke W.F."/>
            <person name="Seedorf H."/>
            <person name="Henne A."/>
            <person name="Kruer M."/>
            <person name="Liesegang H."/>
            <person name="Hedderich R."/>
            <person name="Gottschalk G."/>
            <person name="Thauer R.K."/>
        </authorList>
    </citation>
    <scope>NUCLEOTIDE SEQUENCE [LARGE SCALE GENOMIC DNA]</scope>
    <source>
        <strain>ATCC 43021 / DSM 3091 / JCM 11832 / MCB-3</strain>
    </source>
</reference>
<gene>
    <name evidence="1" type="primary">nfo</name>
    <name type="ordered locus">Msp_0992</name>
</gene>
<name>END4_METST</name>
<sequence length="276" mass="31012">MFTIGAHLSISKGFENLGLEALSIDANTAQFFPRSPRGGKAKPLNQADVDGLQELMDNTTMDVILAHAPYIINLASKSEKTRNNAYEIFEDDLKRLDNLPNNMYNFHPGSHVQQGVEKGIELISDSLNKLIREDMKTTILLETMAGKGTEIGRTFEELESIIEKIDMDEKVGVCIDTCHIYDGGYDIVNDLDGVIDEFDSIIGLDRLKAIHLNDSKYGLNSHKDRHEKIGMGKIGIDAITEIINHKKLRDLPFYLETPNDVEGYKEEIDLLRGLYK</sequence>
<proteinExistence type="inferred from homology"/>
<evidence type="ECO:0000255" key="1">
    <source>
        <dbReference type="HAMAP-Rule" id="MF_00152"/>
    </source>
</evidence>
<comment type="function">
    <text evidence="1">Endonuclease IV plays a role in DNA repair. It cleaves phosphodiester bonds at apurinic or apyrimidinic (AP) sites, generating a 3'-hydroxyl group and a 5'-terminal sugar phosphate.</text>
</comment>
<comment type="catalytic activity">
    <reaction evidence="1">
        <text>Endonucleolytic cleavage to 5'-phosphooligonucleotide end-products.</text>
        <dbReference type="EC" id="3.1.21.2"/>
    </reaction>
</comment>
<comment type="cofactor">
    <cofactor evidence="1">
        <name>Zn(2+)</name>
        <dbReference type="ChEBI" id="CHEBI:29105"/>
    </cofactor>
    <text evidence="1">Binds 3 Zn(2+) ions.</text>
</comment>
<comment type="similarity">
    <text evidence="1">Belongs to the AP endonuclease 2 family.</text>
</comment>
<dbReference type="EC" id="3.1.21.2" evidence="1"/>
<dbReference type="EMBL" id="CP000102">
    <property type="protein sequence ID" value="ABC57380.1"/>
    <property type="molecule type" value="Genomic_DNA"/>
</dbReference>
<dbReference type="RefSeq" id="WP_011406579.1">
    <property type="nucleotide sequence ID" value="NC_007681.1"/>
</dbReference>
<dbReference type="SMR" id="Q2NFM3"/>
<dbReference type="STRING" id="339860.Msp_0992"/>
<dbReference type="KEGG" id="mst:Msp_0992"/>
<dbReference type="eggNOG" id="arCOG01894">
    <property type="taxonomic scope" value="Archaea"/>
</dbReference>
<dbReference type="HOGENOM" id="CLU_025885_4_1_2"/>
<dbReference type="OrthoDB" id="33250at2157"/>
<dbReference type="Proteomes" id="UP000001931">
    <property type="component" value="Chromosome"/>
</dbReference>
<dbReference type="GO" id="GO:0008833">
    <property type="term" value="F:deoxyribonuclease IV (phage-T4-induced) activity"/>
    <property type="evidence" value="ECO:0007669"/>
    <property type="project" value="UniProtKB-UniRule"/>
</dbReference>
<dbReference type="GO" id="GO:0003677">
    <property type="term" value="F:DNA binding"/>
    <property type="evidence" value="ECO:0007669"/>
    <property type="project" value="InterPro"/>
</dbReference>
<dbReference type="GO" id="GO:0003906">
    <property type="term" value="F:DNA-(apurinic or apyrimidinic site) endonuclease activity"/>
    <property type="evidence" value="ECO:0007669"/>
    <property type="project" value="TreeGrafter"/>
</dbReference>
<dbReference type="GO" id="GO:0008081">
    <property type="term" value="F:phosphoric diester hydrolase activity"/>
    <property type="evidence" value="ECO:0007669"/>
    <property type="project" value="TreeGrafter"/>
</dbReference>
<dbReference type="GO" id="GO:0008270">
    <property type="term" value="F:zinc ion binding"/>
    <property type="evidence" value="ECO:0007669"/>
    <property type="project" value="UniProtKB-UniRule"/>
</dbReference>
<dbReference type="GO" id="GO:0006284">
    <property type="term" value="P:base-excision repair"/>
    <property type="evidence" value="ECO:0007669"/>
    <property type="project" value="TreeGrafter"/>
</dbReference>
<dbReference type="CDD" id="cd00019">
    <property type="entry name" value="AP2Ec"/>
    <property type="match status" value="1"/>
</dbReference>
<dbReference type="FunFam" id="3.20.20.150:FF:000001">
    <property type="entry name" value="Probable endonuclease 4"/>
    <property type="match status" value="1"/>
</dbReference>
<dbReference type="Gene3D" id="3.20.20.150">
    <property type="entry name" value="Divalent-metal-dependent TIM barrel enzymes"/>
    <property type="match status" value="1"/>
</dbReference>
<dbReference type="HAMAP" id="MF_00152">
    <property type="entry name" value="Nfo"/>
    <property type="match status" value="1"/>
</dbReference>
<dbReference type="InterPro" id="IPR001719">
    <property type="entry name" value="AP_endonuc_2"/>
</dbReference>
<dbReference type="InterPro" id="IPR018246">
    <property type="entry name" value="AP_endonuc_F2_Zn_BS"/>
</dbReference>
<dbReference type="InterPro" id="IPR036237">
    <property type="entry name" value="Xyl_isomerase-like_sf"/>
</dbReference>
<dbReference type="InterPro" id="IPR013022">
    <property type="entry name" value="Xyl_isomerase-like_TIM-brl"/>
</dbReference>
<dbReference type="NCBIfam" id="TIGR00587">
    <property type="entry name" value="nfo"/>
    <property type="match status" value="1"/>
</dbReference>
<dbReference type="PANTHER" id="PTHR21445:SF0">
    <property type="entry name" value="APURINIC-APYRIMIDINIC ENDONUCLEASE"/>
    <property type="match status" value="1"/>
</dbReference>
<dbReference type="PANTHER" id="PTHR21445">
    <property type="entry name" value="ENDONUCLEASE IV ENDODEOXYRIBONUCLEASE IV"/>
    <property type="match status" value="1"/>
</dbReference>
<dbReference type="Pfam" id="PF01261">
    <property type="entry name" value="AP_endonuc_2"/>
    <property type="match status" value="1"/>
</dbReference>
<dbReference type="SMART" id="SM00518">
    <property type="entry name" value="AP2Ec"/>
    <property type="match status" value="1"/>
</dbReference>
<dbReference type="SUPFAM" id="SSF51658">
    <property type="entry name" value="Xylose isomerase-like"/>
    <property type="match status" value="1"/>
</dbReference>
<dbReference type="PROSITE" id="PS00729">
    <property type="entry name" value="AP_NUCLEASE_F2_1"/>
    <property type="match status" value="1"/>
</dbReference>
<dbReference type="PROSITE" id="PS00730">
    <property type="entry name" value="AP_NUCLEASE_F2_2"/>
    <property type="match status" value="1"/>
</dbReference>
<dbReference type="PROSITE" id="PS00731">
    <property type="entry name" value="AP_NUCLEASE_F2_3"/>
    <property type="match status" value="1"/>
</dbReference>
<dbReference type="PROSITE" id="PS51432">
    <property type="entry name" value="AP_NUCLEASE_F2_4"/>
    <property type="match status" value="1"/>
</dbReference>
<protein>
    <recommendedName>
        <fullName evidence="1">Probable endonuclease 4</fullName>
        <ecNumber evidence="1">3.1.21.2</ecNumber>
    </recommendedName>
    <alternativeName>
        <fullName evidence="1">Endodeoxyribonuclease IV</fullName>
    </alternativeName>
    <alternativeName>
        <fullName evidence="1">Endonuclease IV</fullName>
    </alternativeName>
</protein>
<feature type="chain" id="PRO_1000011316" description="Probable endonuclease 4">
    <location>
        <begin position="1"/>
        <end position="276"/>
    </location>
</feature>
<feature type="binding site" evidence="1">
    <location>
        <position position="67"/>
    </location>
    <ligand>
        <name>Zn(2+)</name>
        <dbReference type="ChEBI" id="CHEBI:29105"/>
        <label>1</label>
    </ligand>
</feature>
<feature type="binding site" evidence="1">
    <location>
        <position position="107"/>
    </location>
    <ligand>
        <name>Zn(2+)</name>
        <dbReference type="ChEBI" id="CHEBI:29105"/>
        <label>1</label>
    </ligand>
</feature>
<feature type="binding site" evidence="1">
    <location>
        <position position="142"/>
    </location>
    <ligand>
        <name>Zn(2+)</name>
        <dbReference type="ChEBI" id="CHEBI:29105"/>
        <label>1</label>
    </ligand>
</feature>
<feature type="binding site" evidence="1">
    <location>
        <position position="142"/>
    </location>
    <ligand>
        <name>Zn(2+)</name>
        <dbReference type="ChEBI" id="CHEBI:29105"/>
        <label>2</label>
    </ligand>
</feature>
<feature type="binding site" evidence="1">
    <location>
        <position position="176"/>
    </location>
    <ligand>
        <name>Zn(2+)</name>
        <dbReference type="ChEBI" id="CHEBI:29105"/>
        <label>2</label>
    </ligand>
</feature>
<feature type="binding site" evidence="1">
    <location>
        <position position="179"/>
    </location>
    <ligand>
        <name>Zn(2+)</name>
        <dbReference type="ChEBI" id="CHEBI:29105"/>
        <label>3</label>
    </ligand>
</feature>
<feature type="binding site" evidence="1">
    <location>
        <position position="211"/>
    </location>
    <ligand>
        <name>Zn(2+)</name>
        <dbReference type="ChEBI" id="CHEBI:29105"/>
        <label>2</label>
    </ligand>
</feature>
<feature type="binding site" evidence="1">
    <location>
        <position position="224"/>
    </location>
    <ligand>
        <name>Zn(2+)</name>
        <dbReference type="ChEBI" id="CHEBI:29105"/>
        <label>3</label>
    </ligand>
</feature>
<feature type="binding site" evidence="1">
    <location>
        <position position="226"/>
    </location>
    <ligand>
        <name>Zn(2+)</name>
        <dbReference type="ChEBI" id="CHEBI:29105"/>
        <label>3</label>
    </ligand>
</feature>
<feature type="binding site" evidence="1">
    <location>
        <position position="256"/>
    </location>
    <ligand>
        <name>Zn(2+)</name>
        <dbReference type="ChEBI" id="CHEBI:29105"/>
        <label>2</label>
    </ligand>
</feature>